<accession>P15410</accession>
<keyword id="KW-0165">Cleavage on pair of basic residues</keyword>
<keyword id="KW-1015">Disulfide bond</keyword>
<keyword id="KW-0372">Hormone</keyword>
<keyword id="KW-0873">Pyrrolidone carboxylic acid</keyword>
<keyword id="KW-1185">Reference proteome</keyword>
<keyword id="KW-0964">Secreted</keyword>
<keyword id="KW-0732">Signal</keyword>
<gene>
    <name type="primary">BBXC1</name>
</gene>
<organism>
    <name type="scientific">Bombyx mori</name>
    <name type="common">Silk moth</name>
    <dbReference type="NCBI Taxonomy" id="7091"/>
    <lineage>
        <taxon>Eukaryota</taxon>
        <taxon>Metazoa</taxon>
        <taxon>Ecdysozoa</taxon>
        <taxon>Arthropoda</taxon>
        <taxon>Hexapoda</taxon>
        <taxon>Insecta</taxon>
        <taxon>Pterygota</taxon>
        <taxon>Neoptera</taxon>
        <taxon>Endopterygota</taxon>
        <taxon>Lepidoptera</taxon>
        <taxon>Glossata</taxon>
        <taxon>Ditrysia</taxon>
        <taxon>Bombycoidea</taxon>
        <taxon>Bombycidae</taxon>
        <taxon>Bombycinae</taxon>
        <taxon>Bombyx</taxon>
    </lineage>
</organism>
<name>BXC1_BOMMO</name>
<protein>
    <recommendedName>
        <fullName>Bombyxin C-1</fullName>
        <shortName>BBX-C1</shortName>
    </recommendedName>
    <alternativeName>
        <fullName>4K-prothoracicotropic hormone</fullName>
        <shortName>4K-PTTH</shortName>
    </alternativeName>
    <component>
        <recommendedName>
            <fullName>Bombyxin C-1 B chain</fullName>
        </recommendedName>
    </component>
    <component>
        <recommendedName>
            <fullName>Bombyxin C-1 A chain</fullName>
        </recommendedName>
    </component>
</protein>
<sequence>MKLVMLLVVVSAMLVLGGAQTASQFYCGDFLARTMSSLCWSDMQKRSGSQYAGYGWPWLPPFSSSRGKRGIVDECCYRPCTIDVLMSYCDN</sequence>
<feature type="signal peptide" evidence="2">
    <location>
        <begin position="1"/>
        <end position="19"/>
    </location>
</feature>
<feature type="peptide" id="PRO_0000016025" description="Bombyxin C-1 B chain">
    <location>
        <begin position="20"/>
        <end position="44"/>
    </location>
</feature>
<feature type="propeptide" id="PRO_0000016026" description="C peptide like">
    <location>
        <begin position="47"/>
        <end position="67"/>
    </location>
</feature>
<feature type="peptide" id="PRO_0000016027" description="Bombyxin C-1 A chain">
    <location>
        <begin position="70"/>
        <end position="91"/>
    </location>
</feature>
<feature type="modified residue" description="Pyrrolidone carboxylic acid" evidence="2">
    <location>
        <position position="20"/>
    </location>
</feature>
<feature type="disulfide bond" description="Interchain (between B and A chains)" evidence="1">
    <location>
        <begin position="27"/>
        <end position="76"/>
    </location>
</feature>
<feature type="disulfide bond" description="Interchain (between B and A chains)" evidence="1">
    <location>
        <begin position="39"/>
        <end position="89"/>
    </location>
</feature>
<feature type="disulfide bond" evidence="1">
    <location>
        <begin position="75"/>
        <end position="80"/>
    </location>
</feature>
<evidence type="ECO:0000250" key="1"/>
<evidence type="ECO:0000255" key="2"/>
<evidence type="ECO:0000305" key="3"/>
<reference key="1">
    <citation type="journal article" date="1990" name="Insect Biochem.">
        <title>A novel family C of the genes that encode bombyxin, an insulin-related brain secretory peptide of the silkmoth Bombyx mori: isolation and characterization of gene C-1.</title>
        <authorList>
            <person name="Iwami M."/>
            <person name="Adachi T."/>
            <person name="Kondo H."/>
            <person name="Kawakami A."/>
            <person name="Suzuki Y."/>
            <person name="Nagasawa H."/>
            <person name="Suzuki A."/>
            <person name="Ishizaki H."/>
        </authorList>
    </citation>
    <scope>NUCLEOTIDE SEQUENCE [GENOMIC DNA]</scope>
</reference>
<reference key="2">
    <citation type="journal article" date="1996" name="J. Mol. Biol.">
        <title>Multiple gene copies for bombyxin, an insulin-related peptide of the silkmoth Bombyx mori: structural signs for gene rearrangement and duplication responsible for generation of multiple molecular forms of bombyxin.</title>
        <authorList>
            <person name="Kondo H."/>
            <person name="Ino M."/>
            <person name="Suzuki A."/>
            <person name="Ishizaki H."/>
            <person name="Iwami M."/>
        </authorList>
    </citation>
    <scope>NUCLEOTIDE SEQUENCE [GENOMIC DNA]</scope>
</reference>
<reference key="3">
    <citation type="journal article" date="1989" name="J. Biol. Chem.">
        <title>cDNA structure and expression of bombyxin, an insulin-like brain secretory peptide of the silkmoth Bombyx mori.</title>
        <authorList>
            <person name="Adachi T."/>
            <person name="Takiya S."/>
            <person name="Suzuki Y."/>
            <person name="Iwami M."/>
            <person name="Kawakami A."/>
            <person name="Takahashi S.Y."/>
            <person name="Ishizaki H."/>
            <person name="Nagasawa H."/>
            <person name="Suzuki A."/>
        </authorList>
    </citation>
    <scope>NUCLEOTIDE SEQUENCE [MRNA] OF 49-91</scope>
</reference>
<comment type="function">
    <text>Brain peptide responsible for activation of prothoracic glands to produce ecdysone in insects.</text>
</comment>
<comment type="subunit">
    <text>Heterodimer of a B chain and an A chain linked by two disulfide bonds.</text>
</comment>
<comment type="subcellular location">
    <subcellularLocation>
        <location>Secreted</location>
    </subcellularLocation>
</comment>
<comment type="miscellaneous">
    <text>Silk worm has two kinds of PTTH: 4K-PTTH and 22K-PTTH; there are many forms of 4K-PTTH.</text>
</comment>
<comment type="similarity">
    <text evidence="3">Belongs to the insulin family.</text>
</comment>
<dbReference type="EMBL" id="D00790">
    <property type="protein sequence ID" value="BAA00686.1"/>
    <property type="molecule type" value="Genomic_DNA"/>
</dbReference>
<dbReference type="EMBL" id="D00791">
    <property type="protein sequence ID" value="BAA00687.1"/>
    <property type="molecule type" value="Genomic_DNA"/>
</dbReference>
<dbReference type="EMBL" id="J04728">
    <property type="protein sequence ID" value="AAA27823.1"/>
    <property type="molecule type" value="mRNA"/>
</dbReference>
<dbReference type="PIR" id="A60296">
    <property type="entry name" value="A60296"/>
</dbReference>
<dbReference type="RefSeq" id="NP_001119736.1">
    <property type="nucleotide sequence ID" value="NM_001126264.1"/>
</dbReference>
<dbReference type="PaxDb" id="7091-BGIBMGA011968-TA"/>
<dbReference type="EnsemblMetazoa" id="NM_001126264.1">
    <property type="protein sequence ID" value="NP_001119736.1"/>
    <property type="gene ID" value="GeneID_100147698"/>
</dbReference>
<dbReference type="GeneID" id="100147698"/>
<dbReference type="KEGG" id="bmor:100147698"/>
<dbReference type="CTD" id="100147698"/>
<dbReference type="eggNOG" id="ENOG502SESX">
    <property type="taxonomic scope" value="Eukaryota"/>
</dbReference>
<dbReference type="HOGENOM" id="CLU_125164_2_0_1"/>
<dbReference type="InParanoid" id="P15410"/>
<dbReference type="OMA" id="HFRINAQ"/>
<dbReference type="OrthoDB" id="493443at7088"/>
<dbReference type="Proteomes" id="UP000005204">
    <property type="component" value="Unassembled WGS sequence"/>
</dbReference>
<dbReference type="GO" id="GO:0005615">
    <property type="term" value="C:extracellular space"/>
    <property type="evidence" value="ECO:0007669"/>
    <property type="project" value="InterPro"/>
</dbReference>
<dbReference type="GO" id="GO:0008083">
    <property type="term" value="F:growth factor activity"/>
    <property type="evidence" value="ECO:0007669"/>
    <property type="project" value="InterPro"/>
</dbReference>
<dbReference type="GO" id="GO:0005179">
    <property type="term" value="F:hormone activity"/>
    <property type="evidence" value="ECO:0007669"/>
    <property type="project" value="UniProtKB-KW"/>
</dbReference>
<dbReference type="CDD" id="cd04366">
    <property type="entry name" value="IlGF_insulin_bombyxin_like"/>
    <property type="match status" value="1"/>
</dbReference>
<dbReference type="Gene3D" id="1.10.100.10">
    <property type="entry name" value="Insulin-like"/>
    <property type="match status" value="1"/>
</dbReference>
<dbReference type="InterPro" id="IPR017097">
    <property type="entry name" value="Bombyxin"/>
</dbReference>
<dbReference type="InterPro" id="IPR016179">
    <property type="entry name" value="Insulin-like"/>
</dbReference>
<dbReference type="InterPro" id="IPR036438">
    <property type="entry name" value="Insulin-like_sf"/>
</dbReference>
<dbReference type="InterPro" id="IPR022353">
    <property type="entry name" value="Insulin_CS"/>
</dbReference>
<dbReference type="InterPro" id="IPR022352">
    <property type="entry name" value="Insulin_family"/>
</dbReference>
<dbReference type="Pfam" id="PF00049">
    <property type="entry name" value="Insulin"/>
    <property type="match status" value="1"/>
</dbReference>
<dbReference type="PIRSF" id="PIRSF037038">
    <property type="entry name" value="Bombyxin"/>
    <property type="match status" value="1"/>
</dbReference>
<dbReference type="PRINTS" id="PR02003">
    <property type="entry name" value="BOMBYXIN"/>
</dbReference>
<dbReference type="PRINTS" id="PR00276">
    <property type="entry name" value="INSULINFAMLY"/>
</dbReference>
<dbReference type="SMART" id="SM00078">
    <property type="entry name" value="IlGF"/>
    <property type="match status" value="1"/>
</dbReference>
<dbReference type="SUPFAM" id="SSF56994">
    <property type="entry name" value="Insulin-like"/>
    <property type="match status" value="1"/>
</dbReference>
<dbReference type="PROSITE" id="PS00262">
    <property type="entry name" value="INSULIN"/>
    <property type="match status" value="1"/>
</dbReference>
<proteinExistence type="inferred from homology"/>